<accession>Q0I5V7</accession>
<gene>
    <name evidence="1" type="primary">cyaY</name>
    <name type="ordered locus">HS_1712</name>
</gene>
<protein>
    <recommendedName>
        <fullName evidence="1">Iron-sulfur cluster assembly protein CyaY</fullName>
    </recommendedName>
</protein>
<feature type="chain" id="PRO_1000010933" description="Iron-sulfur cluster assembly protein CyaY">
    <location>
        <begin position="1"/>
        <end position="102"/>
    </location>
</feature>
<reference key="1">
    <citation type="journal article" date="2007" name="J. Bacteriol.">
        <title>Complete genome sequence of Haemophilus somnus (Histophilus somni) strain 129Pt and comparison to Haemophilus ducreyi 35000HP and Haemophilus influenzae Rd.</title>
        <authorList>
            <person name="Challacombe J.F."/>
            <person name="Duncan A.J."/>
            <person name="Brettin T.S."/>
            <person name="Bruce D."/>
            <person name="Chertkov O."/>
            <person name="Detter J.C."/>
            <person name="Han C.S."/>
            <person name="Misra M."/>
            <person name="Richardson P."/>
            <person name="Tapia R."/>
            <person name="Thayer N."/>
            <person name="Xie G."/>
            <person name="Inzana T.J."/>
        </authorList>
    </citation>
    <scope>NUCLEOTIDE SEQUENCE [LARGE SCALE GENOMIC DNA]</scope>
    <source>
        <strain>129Pt</strain>
    </source>
</reference>
<evidence type="ECO:0000255" key="1">
    <source>
        <dbReference type="HAMAP-Rule" id="MF_00142"/>
    </source>
</evidence>
<dbReference type="EMBL" id="CP000436">
    <property type="protein sequence ID" value="ABI25980.1"/>
    <property type="molecule type" value="Genomic_DNA"/>
</dbReference>
<dbReference type="SMR" id="Q0I5V7"/>
<dbReference type="KEGG" id="hso:HS_1712"/>
<dbReference type="eggNOG" id="COG1965">
    <property type="taxonomic scope" value="Bacteria"/>
</dbReference>
<dbReference type="HOGENOM" id="CLU_080880_3_0_6"/>
<dbReference type="GO" id="GO:0005829">
    <property type="term" value="C:cytosol"/>
    <property type="evidence" value="ECO:0007669"/>
    <property type="project" value="TreeGrafter"/>
</dbReference>
<dbReference type="GO" id="GO:0008199">
    <property type="term" value="F:ferric iron binding"/>
    <property type="evidence" value="ECO:0007669"/>
    <property type="project" value="InterPro"/>
</dbReference>
<dbReference type="GO" id="GO:0008198">
    <property type="term" value="F:ferrous iron binding"/>
    <property type="evidence" value="ECO:0007669"/>
    <property type="project" value="TreeGrafter"/>
</dbReference>
<dbReference type="GO" id="GO:0016226">
    <property type="term" value="P:iron-sulfur cluster assembly"/>
    <property type="evidence" value="ECO:0007669"/>
    <property type="project" value="UniProtKB-UniRule"/>
</dbReference>
<dbReference type="CDD" id="cd00503">
    <property type="entry name" value="Frataxin"/>
    <property type="match status" value="1"/>
</dbReference>
<dbReference type="Gene3D" id="3.30.920.10">
    <property type="entry name" value="Frataxin/CyaY"/>
    <property type="match status" value="1"/>
</dbReference>
<dbReference type="HAMAP" id="MF_00142">
    <property type="entry name" value="CyaY"/>
    <property type="match status" value="1"/>
</dbReference>
<dbReference type="InterPro" id="IPR047584">
    <property type="entry name" value="CyaY"/>
</dbReference>
<dbReference type="InterPro" id="IPR002908">
    <property type="entry name" value="Frataxin/CyaY"/>
</dbReference>
<dbReference type="InterPro" id="IPR036524">
    <property type="entry name" value="Frataxin/CyaY_sf"/>
</dbReference>
<dbReference type="InterPro" id="IPR020895">
    <property type="entry name" value="Frataxin_CS"/>
</dbReference>
<dbReference type="NCBIfam" id="TIGR03421">
    <property type="entry name" value="FeS_CyaY"/>
    <property type="match status" value="1"/>
</dbReference>
<dbReference type="PANTHER" id="PTHR16821">
    <property type="entry name" value="FRATAXIN"/>
    <property type="match status" value="1"/>
</dbReference>
<dbReference type="PANTHER" id="PTHR16821:SF2">
    <property type="entry name" value="FRATAXIN, MITOCHONDRIAL"/>
    <property type="match status" value="1"/>
</dbReference>
<dbReference type="Pfam" id="PF01491">
    <property type="entry name" value="Frataxin_Cyay"/>
    <property type="match status" value="1"/>
</dbReference>
<dbReference type="SMART" id="SM01219">
    <property type="entry name" value="Frataxin_Cyay"/>
    <property type="match status" value="1"/>
</dbReference>
<dbReference type="SUPFAM" id="SSF55387">
    <property type="entry name" value="Frataxin/Nqo15-like"/>
    <property type="match status" value="1"/>
</dbReference>
<dbReference type="PROSITE" id="PS01344">
    <property type="entry name" value="FRATAXIN_1"/>
    <property type="match status" value="1"/>
</dbReference>
<dbReference type="PROSITE" id="PS50810">
    <property type="entry name" value="FRATAXIN_2"/>
    <property type="match status" value="1"/>
</dbReference>
<proteinExistence type="inferred from homology"/>
<keyword id="KW-0408">Iron</keyword>
<keyword id="KW-0479">Metal-binding</keyword>
<sequence length="102" mass="11722">MNIAEYHQNIEQVWLQIEEQLEEQGCDVDCDTQGSVFTITFADRSQIVVNKQEPLLELWLASKAGGFHFAFKNNQWIAQDGKLFWQCLEQACLAHGEQVSFS</sequence>
<name>CYAY_HISS1</name>
<comment type="function">
    <text evidence="1">Involved in iron-sulfur (Fe-S) cluster assembly. May act as a regulator of Fe-S biogenesis.</text>
</comment>
<comment type="similarity">
    <text evidence="1">Belongs to the frataxin family.</text>
</comment>
<organism>
    <name type="scientific">Histophilus somni (strain 129Pt)</name>
    <name type="common">Haemophilus somnus</name>
    <dbReference type="NCBI Taxonomy" id="205914"/>
    <lineage>
        <taxon>Bacteria</taxon>
        <taxon>Pseudomonadati</taxon>
        <taxon>Pseudomonadota</taxon>
        <taxon>Gammaproteobacteria</taxon>
        <taxon>Pasteurellales</taxon>
        <taxon>Pasteurellaceae</taxon>
        <taxon>Histophilus</taxon>
    </lineage>
</organism>